<sequence>MDIWKPEIKYLRYTNGFNVSELEDACFKFNYKFPKVGYCRVPSHAWCRNQGSFCATLTLYGKSKHYDKYFGVITGFTAFANTVEEAVNKLVFLAVDFITWRRQELNVHG</sequence>
<dbReference type="EMBL" id="AF391542">
    <property type="protein sequence ID" value="AAL57316.1"/>
    <property type="molecule type" value="Genomic_RNA"/>
</dbReference>
<dbReference type="Proteomes" id="UP000008571">
    <property type="component" value="Genome"/>
</dbReference>
<dbReference type="InterPro" id="IPR006841">
    <property type="entry name" value="Corona_NS2"/>
</dbReference>
<dbReference type="Pfam" id="PF04753">
    <property type="entry name" value="Corona_NS12-7"/>
    <property type="match status" value="1"/>
</dbReference>
<reference key="1">
    <citation type="journal article" date="2001" name="J. Gen. Virol.">
        <title>Comparison of genomic and predicted amino acid sequences of respiratory and enteric bovine coronaviruses isolated from the same animal with fatal shipping pneumonia.</title>
        <authorList>
            <person name="Chouljenko V.N."/>
            <person name="Lin X.Q."/>
            <person name="Storz J."/>
            <person name="Kousoulas K.G."/>
            <person name="Gorbalenya A.E."/>
        </authorList>
    </citation>
    <scope>NUCLEOTIDE SEQUENCE [GENOMIC RNA]</scope>
</reference>
<feature type="chain" id="PRO_0000283950" description="Non-structural protein of 12.7 kDa">
    <location>
        <begin position="1"/>
        <end position="109"/>
    </location>
</feature>
<organism>
    <name type="scientific">Bovine coronavirus (strain 98TXSF-110-LUN)</name>
    <name type="common">BCoV-LUN</name>
    <name type="synonym">BCV</name>
    <dbReference type="NCBI Taxonomy" id="233264"/>
    <lineage>
        <taxon>Viruses</taxon>
        <taxon>Riboviria</taxon>
        <taxon>Orthornavirae</taxon>
        <taxon>Pisuviricota</taxon>
        <taxon>Pisoniviricetes</taxon>
        <taxon>Nidovirales</taxon>
        <taxon>Cornidovirineae</taxon>
        <taxon>Coronaviridae</taxon>
        <taxon>Orthocoronavirinae</taxon>
        <taxon>Betacoronavirus</taxon>
        <taxon>Embecovirus</taxon>
        <taxon>Betacoronavirus 1</taxon>
    </lineage>
</organism>
<organismHost>
    <name type="scientific">Bos taurus</name>
    <name type="common">Bovine</name>
    <dbReference type="NCBI Taxonomy" id="9913"/>
</organismHost>
<evidence type="ECO:0000305" key="1"/>
<gene>
    <name type="ORF">5a</name>
</gene>
<protein>
    <recommendedName>
        <fullName>Non-structural protein of 12.7 kDa</fullName>
        <shortName>ns12.7</shortName>
    </recommendedName>
    <alternativeName>
        <fullName>12.7 kDa accessory protein</fullName>
    </alternativeName>
</protein>
<accession>Q8V434</accession>
<name>NS12_CVBLU</name>
<proteinExistence type="inferred from homology"/>
<comment type="similarity">
    <text evidence="1">Belongs to the coronaviruses ns12.7 protein family.</text>
</comment>